<name>PAI1_HUMAN</name>
<reference key="1">
    <citation type="journal article" date="1986" name="EMBO J.">
        <title>Endothelial plasminogen activator inhibitor (PAI): a new member of the Serpin gene family.</title>
        <authorList>
            <person name="Pannekoek H."/>
            <person name="Veerman H."/>
            <person name="Lambers H."/>
            <person name="Diergaarde P."/>
            <person name="Verweij C.L."/>
            <person name="van Zonneveld A.-J."/>
            <person name="van Mourik J.A."/>
        </authorList>
    </citation>
    <scope>NUCLEOTIDE SEQUENCE [MRNA] (ISOFORM 1)</scope>
    <scope>TISSUE SPECIFICITY</scope>
    <scope>SUBCELLULAR LOCATION</scope>
</reference>
<reference key="2">
    <citation type="journal article" date="1987" name="Biochemistry">
        <title>Structure of the human plasminogen activator inhibitor 1 gene: nonrandom distribution of introns.</title>
        <authorList>
            <person name="Loskutoff D.J."/>
            <person name="Linders M."/>
            <person name="Keijer J."/>
            <person name="Veerman H."/>
            <person name="van Heerikhuizen H."/>
            <person name="Pannekoek H."/>
        </authorList>
    </citation>
    <scope>NUCLEOTIDE SEQUENCE [GENOMIC DNA]</scope>
</reference>
<reference key="3">
    <citation type="journal article" date="1986" name="J. Clin. Invest.">
        <title>cDNA cloning of human plasminogen activator-inhibitor from endothelial cells.</title>
        <authorList>
            <person name="Ginsburg D."/>
            <person name="Zeheb R."/>
            <person name="Yang A.Y."/>
            <person name="Rafferty U.M."/>
            <person name="Andreasen P.A."/>
            <person name="Nielsen L."/>
            <person name="Dano K."/>
            <person name="Lebo R.V."/>
            <person name="Gelehrter T.D."/>
        </authorList>
    </citation>
    <scope>NUCLEOTIDE SEQUENCE [MRNA] (ISOFORM 1)</scope>
    <scope>TISSUE SPECIFICITY</scope>
</reference>
<reference key="4">
    <citation type="journal article" date="1989" name="Gene">
        <title>Structure and expression of the human gene encoding plasminogen activator inhibitor, PAI-1.</title>
        <authorList>
            <person name="Follo M."/>
            <person name="Ginsburg D."/>
        </authorList>
    </citation>
    <scope>NUCLEOTIDE SEQUENCE [GENOMIC DNA]</scope>
</reference>
<reference key="5">
    <citation type="journal article" date="1988" name="Eur. J. Biochem.">
        <title>The organization of the human-plasminogen-activator-inhibitor-1 gene. Implications on the evolution of the serine-protease inhibitor family.</title>
        <authorList>
            <person name="Strandberg L."/>
            <person name="Lawrence D."/>
            <person name="Ny T."/>
        </authorList>
    </citation>
    <scope>NUCLEOTIDE SEQUENCE [GENOMIC DNA]</scope>
</reference>
<reference key="6">
    <citation type="journal article" date="1988" name="J. Biol. Chem.">
        <title>Human plasminogen activator inhibitor-1 gene. Promoter and structural gene nucleotide sequences.</title>
        <authorList>
            <person name="Bosma P.J."/>
            <person name="van den Berg E.A."/>
            <person name="Kooistra T."/>
            <person name="Siemieniak D.R."/>
            <person name="Slightom J.L."/>
        </authorList>
    </citation>
    <scope>NUCLEOTIDE SEQUENCE [GENOMIC DNA]</scope>
</reference>
<reference key="7">
    <citation type="submission" date="1992-02" db="EMBL/GenBank/DDBJ databases">
        <authorList>
            <person name="Pannekoek H."/>
        </authorList>
    </citation>
    <scope>NUCLEOTIDE SEQUENCE [MRNA] (ISOFORM 1)</scope>
</reference>
<reference key="8">
    <citation type="submission" date="2001-06" db="EMBL/GenBank/DDBJ databases">
        <authorList>
            <consortium name="SeattleSNPs variation discovery resource"/>
        </authorList>
    </citation>
    <scope>NUCLEOTIDE SEQUENCE [GENOMIC DNA]</scope>
    <scope>VARIANTS THR-15; ILE-17; PRO-25; HIS-209 AND ASN-255</scope>
</reference>
<reference key="9">
    <citation type="journal article" date="2004" name="Nat. Genet.">
        <title>Complete sequencing and characterization of 21,243 full-length human cDNAs.</title>
        <authorList>
            <person name="Ota T."/>
            <person name="Suzuki Y."/>
            <person name="Nishikawa T."/>
            <person name="Otsuki T."/>
            <person name="Sugiyama T."/>
            <person name="Irie R."/>
            <person name="Wakamatsu A."/>
            <person name="Hayashi K."/>
            <person name="Sato H."/>
            <person name="Nagai K."/>
            <person name="Kimura K."/>
            <person name="Makita H."/>
            <person name="Sekine M."/>
            <person name="Obayashi M."/>
            <person name="Nishi T."/>
            <person name="Shibahara T."/>
            <person name="Tanaka T."/>
            <person name="Ishii S."/>
            <person name="Yamamoto J."/>
            <person name="Saito K."/>
            <person name="Kawai Y."/>
            <person name="Isono Y."/>
            <person name="Nakamura Y."/>
            <person name="Nagahari K."/>
            <person name="Murakami K."/>
            <person name="Yasuda T."/>
            <person name="Iwayanagi T."/>
            <person name="Wagatsuma M."/>
            <person name="Shiratori A."/>
            <person name="Sudo H."/>
            <person name="Hosoiri T."/>
            <person name="Kaku Y."/>
            <person name="Kodaira H."/>
            <person name="Kondo H."/>
            <person name="Sugawara M."/>
            <person name="Takahashi M."/>
            <person name="Kanda K."/>
            <person name="Yokoi T."/>
            <person name="Furuya T."/>
            <person name="Kikkawa E."/>
            <person name="Omura Y."/>
            <person name="Abe K."/>
            <person name="Kamihara K."/>
            <person name="Katsuta N."/>
            <person name="Sato K."/>
            <person name="Tanikawa M."/>
            <person name="Yamazaki M."/>
            <person name="Ninomiya K."/>
            <person name="Ishibashi T."/>
            <person name="Yamashita H."/>
            <person name="Murakawa K."/>
            <person name="Fujimori K."/>
            <person name="Tanai H."/>
            <person name="Kimata M."/>
            <person name="Watanabe M."/>
            <person name="Hiraoka S."/>
            <person name="Chiba Y."/>
            <person name="Ishida S."/>
            <person name="Ono Y."/>
            <person name="Takiguchi S."/>
            <person name="Watanabe S."/>
            <person name="Yosida M."/>
            <person name="Hotuta T."/>
            <person name="Kusano J."/>
            <person name="Kanehori K."/>
            <person name="Takahashi-Fujii A."/>
            <person name="Hara H."/>
            <person name="Tanase T.-O."/>
            <person name="Nomura Y."/>
            <person name="Togiya S."/>
            <person name="Komai F."/>
            <person name="Hara R."/>
            <person name="Takeuchi K."/>
            <person name="Arita M."/>
            <person name="Imose N."/>
            <person name="Musashino K."/>
            <person name="Yuuki H."/>
            <person name="Oshima A."/>
            <person name="Sasaki N."/>
            <person name="Aotsuka S."/>
            <person name="Yoshikawa Y."/>
            <person name="Matsunawa H."/>
            <person name="Ichihara T."/>
            <person name="Shiohata N."/>
            <person name="Sano S."/>
            <person name="Moriya S."/>
            <person name="Momiyama H."/>
            <person name="Satoh N."/>
            <person name="Takami S."/>
            <person name="Terashima Y."/>
            <person name="Suzuki O."/>
            <person name="Nakagawa S."/>
            <person name="Senoh A."/>
            <person name="Mizoguchi H."/>
            <person name="Goto Y."/>
            <person name="Shimizu F."/>
            <person name="Wakebe H."/>
            <person name="Hishigaki H."/>
            <person name="Watanabe T."/>
            <person name="Sugiyama A."/>
            <person name="Takemoto M."/>
            <person name="Kawakami B."/>
            <person name="Yamazaki M."/>
            <person name="Watanabe K."/>
            <person name="Kumagai A."/>
            <person name="Itakura S."/>
            <person name="Fukuzumi Y."/>
            <person name="Fujimori Y."/>
            <person name="Komiyama M."/>
            <person name="Tashiro H."/>
            <person name="Tanigami A."/>
            <person name="Fujiwara T."/>
            <person name="Ono T."/>
            <person name="Yamada K."/>
            <person name="Fujii Y."/>
            <person name="Ozaki K."/>
            <person name="Hirao M."/>
            <person name="Ohmori Y."/>
            <person name="Kawabata A."/>
            <person name="Hikiji T."/>
            <person name="Kobatake N."/>
            <person name="Inagaki H."/>
            <person name="Ikema Y."/>
            <person name="Okamoto S."/>
            <person name="Okitani R."/>
            <person name="Kawakami T."/>
            <person name="Noguchi S."/>
            <person name="Itoh T."/>
            <person name="Shigeta K."/>
            <person name="Senba T."/>
            <person name="Matsumura K."/>
            <person name="Nakajima Y."/>
            <person name="Mizuno T."/>
            <person name="Morinaga M."/>
            <person name="Sasaki M."/>
            <person name="Togashi T."/>
            <person name="Oyama M."/>
            <person name="Hata H."/>
            <person name="Watanabe M."/>
            <person name="Komatsu T."/>
            <person name="Mizushima-Sugano J."/>
            <person name="Satoh T."/>
            <person name="Shirai Y."/>
            <person name="Takahashi Y."/>
            <person name="Nakagawa K."/>
            <person name="Okumura K."/>
            <person name="Nagase T."/>
            <person name="Nomura N."/>
            <person name="Kikuchi H."/>
            <person name="Masuho Y."/>
            <person name="Yamashita R."/>
            <person name="Nakai K."/>
            <person name="Yada T."/>
            <person name="Nakamura Y."/>
            <person name="Ohara O."/>
            <person name="Isogai T."/>
            <person name="Sugano S."/>
        </authorList>
    </citation>
    <scope>NUCLEOTIDE SEQUENCE [LARGE SCALE MRNA] (ISOFORM 2)</scope>
</reference>
<reference key="10">
    <citation type="journal article" date="2003" name="Nature">
        <title>The DNA sequence of human chromosome 7.</title>
        <authorList>
            <person name="Hillier L.W."/>
            <person name="Fulton R.S."/>
            <person name="Fulton L.A."/>
            <person name="Graves T.A."/>
            <person name="Pepin K.H."/>
            <person name="Wagner-McPherson C."/>
            <person name="Layman D."/>
            <person name="Maas J."/>
            <person name="Jaeger S."/>
            <person name="Walker R."/>
            <person name="Wylie K."/>
            <person name="Sekhon M."/>
            <person name="Becker M.C."/>
            <person name="O'Laughlin M.D."/>
            <person name="Schaller M.E."/>
            <person name="Fewell G.A."/>
            <person name="Delehaunty K.D."/>
            <person name="Miner T.L."/>
            <person name="Nash W.E."/>
            <person name="Cordes M."/>
            <person name="Du H."/>
            <person name="Sun H."/>
            <person name="Edwards J."/>
            <person name="Bradshaw-Cordum H."/>
            <person name="Ali J."/>
            <person name="Andrews S."/>
            <person name="Isak A."/>
            <person name="Vanbrunt A."/>
            <person name="Nguyen C."/>
            <person name="Du F."/>
            <person name="Lamar B."/>
            <person name="Courtney L."/>
            <person name="Kalicki J."/>
            <person name="Ozersky P."/>
            <person name="Bielicki L."/>
            <person name="Scott K."/>
            <person name="Holmes A."/>
            <person name="Harkins R."/>
            <person name="Harris A."/>
            <person name="Strong C.M."/>
            <person name="Hou S."/>
            <person name="Tomlinson C."/>
            <person name="Dauphin-Kohlberg S."/>
            <person name="Kozlowicz-Reilly A."/>
            <person name="Leonard S."/>
            <person name="Rohlfing T."/>
            <person name="Rock S.M."/>
            <person name="Tin-Wollam A.-M."/>
            <person name="Abbott A."/>
            <person name="Minx P."/>
            <person name="Maupin R."/>
            <person name="Strowmatt C."/>
            <person name="Latreille P."/>
            <person name="Miller N."/>
            <person name="Johnson D."/>
            <person name="Murray J."/>
            <person name="Woessner J.P."/>
            <person name="Wendl M.C."/>
            <person name="Yang S.-P."/>
            <person name="Schultz B.R."/>
            <person name="Wallis J.W."/>
            <person name="Spieth J."/>
            <person name="Bieri T.A."/>
            <person name="Nelson J.O."/>
            <person name="Berkowicz N."/>
            <person name="Wohldmann P.E."/>
            <person name="Cook L.L."/>
            <person name="Hickenbotham M.T."/>
            <person name="Eldred J."/>
            <person name="Williams D."/>
            <person name="Bedell J.A."/>
            <person name="Mardis E.R."/>
            <person name="Clifton S.W."/>
            <person name="Chissoe S.L."/>
            <person name="Marra M.A."/>
            <person name="Raymond C."/>
            <person name="Haugen E."/>
            <person name="Gillett W."/>
            <person name="Zhou Y."/>
            <person name="James R."/>
            <person name="Phelps K."/>
            <person name="Iadanoto S."/>
            <person name="Bubb K."/>
            <person name="Simms E."/>
            <person name="Levy R."/>
            <person name="Clendenning J."/>
            <person name="Kaul R."/>
            <person name="Kent W.J."/>
            <person name="Furey T.S."/>
            <person name="Baertsch R.A."/>
            <person name="Brent M.R."/>
            <person name="Keibler E."/>
            <person name="Flicek P."/>
            <person name="Bork P."/>
            <person name="Suyama M."/>
            <person name="Bailey J.A."/>
            <person name="Portnoy M.E."/>
            <person name="Torrents D."/>
            <person name="Chinwalla A.T."/>
            <person name="Gish W.R."/>
            <person name="Eddy S.R."/>
            <person name="McPherson J.D."/>
            <person name="Olson M.V."/>
            <person name="Eichler E.E."/>
            <person name="Green E.D."/>
            <person name="Waterston R.H."/>
            <person name="Wilson R.K."/>
        </authorList>
    </citation>
    <scope>NUCLEOTIDE SEQUENCE [LARGE SCALE GENOMIC DNA]</scope>
</reference>
<reference key="11">
    <citation type="journal article" date="2004" name="Genome Res.">
        <title>The status, quality, and expansion of the NIH full-length cDNA project: the Mammalian Gene Collection (MGC).</title>
        <authorList>
            <consortium name="The MGC Project Team"/>
        </authorList>
    </citation>
    <scope>NUCLEOTIDE SEQUENCE [LARGE SCALE MRNA] (ISOFORM 1)</scope>
    <source>
        <tissue>Lung</tissue>
    </source>
</reference>
<reference key="12">
    <citation type="journal article" date="1986" name="Proc. Natl. Acad. Sci. U.S.A.">
        <title>Cloning and sequence of a cDNA coding for the human beta-migrating endothelial-cell-type plasminogen activator inhibitor.</title>
        <authorList>
            <person name="Ny T."/>
            <person name="Sawdey M."/>
            <person name="Lawrence D."/>
            <person name="Millan J.L."/>
            <person name="Loskutoff D.J."/>
        </authorList>
    </citation>
    <scope>NUCLEOTIDE SEQUENCE [MRNA] OF 20-402 (ISOFORM 1)</scope>
</reference>
<reference key="13">
    <citation type="journal article" date="1986" name="FEBS Lett.">
        <title>Plasminogen activator inhibitor type-1: reactive center and amino-terminal heterogeneity determined by protein and cDNA sequencing.</title>
        <authorList>
            <person name="Andreasen P.A."/>
            <person name="Riccio A."/>
            <person name="Welinder K.G."/>
            <person name="Douglas R."/>
            <person name="Sartorio R."/>
            <person name="Nielsen L.S."/>
            <person name="Oppenheimer C."/>
            <person name="Blasi F."/>
            <person name="Danoe K."/>
        </authorList>
    </citation>
    <scope>NUCLEOTIDE SEQUENCE [MRNA] OF 1-47 AND 364-402 (ISOFORM 1)</scope>
</reference>
<reference key="14">
    <citation type="journal article" date="1987" name="FEBS Lett.">
        <title>cDNA cloning and expression in E. coli of a plasminogen activator inhibitor (PAI) related to a PAI produced by Hep G2 hepatoma cell.</title>
        <authorList>
            <person name="Wun T.C."/>
            <person name="Kretzmer K.K."/>
        </authorList>
    </citation>
    <scope>NUCLEOTIDE SEQUENCE [MRNA] OF 17-402 (ISOFORM 1)</scope>
    <scope>PARTIAL PROTEIN SEQUENCE</scope>
    <source>
        <tissue>Placenta</tissue>
    </source>
</reference>
<reference key="15">
    <citation type="journal article" date="1993" name="Blood">
        <title>Deficiency of plasma plasminogen activator inhibitor 1 results in hyperfibrinolytic bleeding.</title>
        <authorList>
            <person name="Lee M.H."/>
            <person name="Vosburgh E."/>
            <person name="Anderson K."/>
            <person name="McDonagh J."/>
        </authorList>
    </citation>
    <scope>FUNCTION</scope>
    <scope>INVOLVEMENT IN PAI-1D</scope>
</reference>
<reference key="16">
    <citation type="journal article" date="1994" name="Biochim. Biophys. Acta">
        <title>Identification of a PAI-1 binding site in vitronectin.</title>
        <authorList>
            <person name="Sigurdardottir O."/>
            <person name="Wiman B."/>
        </authorList>
    </citation>
    <scope>INTERACTION WITH VTN</scope>
</reference>
<reference key="17">
    <citation type="journal article" date="1997" name="Blood">
        <title>Human plasminogen activator inhibitor-1 (PAI-1) deficiency: characterization of a large kindred with a null mutation in the PAI-1 gene.</title>
        <authorList>
            <person name="Fay W.P."/>
            <person name="Parker A.C."/>
            <person name="Condrey L.R."/>
            <person name="Shapiro A.D."/>
        </authorList>
    </citation>
    <scope>FUNCTION</scope>
    <scope>INVOLVEMENT IN PAI-1D</scope>
</reference>
<reference key="18">
    <citation type="journal article" date="1997" name="Exp. Cell Res.">
        <title>Plasminogen activator inhibitor-1 represses integrin- and vitronectin-mediated cell migration independently of its function as an inhibitor of plasminogen activation.</title>
        <authorList>
            <person name="Kjoeller L."/>
            <person name="Kanse S.M."/>
            <person name="Kirkegaard T."/>
            <person name="Rodenburg K.W."/>
            <person name="Roenne E."/>
            <person name="Goodman S.L."/>
            <person name="Preissner K.T."/>
            <person name="Ossowski L."/>
            <person name="Andreasen P.A."/>
        </authorList>
    </citation>
    <scope>FUNCTION</scope>
</reference>
<reference key="19">
    <citation type="journal article" date="1997" name="J. Cell Sci.">
        <title>Binding of urokinase to plasminogen activator inhibitor type-1 mediates cell adhesion and spreading.</title>
        <authorList>
            <person name="Planus E."/>
            <person name="Barlovatz-Meimon G."/>
            <person name="Rogers R.A."/>
            <person name="Bonavaud S."/>
            <person name="Ingber D.E."/>
            <person name="Wang N."/>
        </authorList>
    </citation>
    <scope>FUNCTION</scope>
</reference>
<reference key="20">
    <citation type="journal article" date="2001" name="J. Biol. Chem.">
        <title>The putative tumor suppressor LRP1B, a novel member of the low density lipoprotein (LDL) receptor family, exhibits both overlapping and distinct properties with the LDL receptor-related protein.</title>
        <authorList>
            <person name="Liu C.-X."/>
            <person name="Li Y."/>
            <person name="Obermoeller-McCormick L.M."/>
            <person name="Schwartz A.L."/>
            <person name="Bu G."/>
        </authorList>
    </citation>
    <scope>INTERACTION WITH LRP1B</scope>
</reference>
<reference key="21">
    <citation type="journal article" date="2004" name="Biochem. J.">
        <title>The mosaic receptor sorLA/LR11 binds components of the plasminogen-activating system and platelet-derived growth factor-BB similarly to LRP1 (low-density lipoprotein receptor-related protein), but mediates slow internalization of bound ligand.</title>
        <authorList>
            <person name="Gliemann J."/>
            <person name="Hermey G."/>
            <person name="Nykjaer A."/>
            <person name="Petersen C.M."/>
            <person name="Jacobsen C."/>
            <person name="Andreasen P.A."/>
        </authorList>
    </citation>
    <scope>INTERACTION WITH LRP1; PLAT; PLAU; PLAUR AND SORL1</scope>
</reference>
<reference key="22">
    <citation type="journal article" date="2004" name="J. Biol. Chem.">
        <title>The low density lipoprotein receptor-related protein is a motogenic receptor for plasminogen activator inhibitor-1.</title>
        <authorList>
            <person name="Degryse B."/>
            <person name="Neels J.G."/>
            <person name="Czekay R.P."/>
            <person name="Aertgeerts K."/>
            <person name="Kamikubo Y."/>
            <person name="Loskutoff D.J."/>
        </authorList>
    </citation>
    <scope>FUNCTION</scope>
</reference>
<reference key="23">
    <citation type="journal article" date="2005" name="Biochem. J.">
        <title>Matriptase-3 is a novel phylogenetically preserved membrane-anchored serine protease with broad serpin reactivity.</title>
        <authorList>
            <person name="Szabo R."/>
            <person name="Netzel-Arnett S."/>
            <person name="Hobson J.P."/>
            <person name="Antalis T.M."/>
            <person name="Bugge T.H."/>
        </authorList>
    </citation>
    <scope>FUNCTION IN MEMBRANE-ANCHORED SERINE PROTEASE TMPRSS7 INHIBITION</scope>
    <scope>HETERODIMER WITH TMPRSS7</scope>
</reference>
<reference key="24">
    <citation type="journal article" date="2006" name="Nat. Cell Biol.">
        <title>Plasminogen activator inhibitor-1 is a critical downstream target of p53 in the induction of replicative senescence.</title>
        <authorList>
            <person name="Kortlever R.M."/>
            <person name="Higgins P.J."/>
            <person name="Bernards R."/>
        </authorList>
    </citation>
    <scope>FUNCTION</scope>
</reference>
<reference key="25">
    <citation type="journal article" date="2007" name="Int. J. Mol. Med.">
        <title>Highly stable plasminogen activator inhibitor type one (VLHL PAI-1) protects fibrin clots from tissue plasminogen activator-mediated fibrinolysis.</title>
        <authorList>
            <person name="Jankun J."/>
            <person name="Aleem A.M."/>
            <person name="Selman S.H."/>
            <person name="Skrzypczak-Jankun E."/>
            <person name="Lysiak-Szydlowska W."/>
            <person name="Grafos N."/>
            <person name="Fryer H.J."/>
            <person name="Greenfield R.S."/>
        </authorList>
    </citation>
    <scope>FUNCTION</scope>
    <scope>MUTAGENESIS OF GLN-197 AND GLY-355</scope>
</reference>
<reference key="26">
    <citation type="journal article" date="2008" name="Arch. Dermatol. Res.">
        <title>SERPINE1 (PAI-1) is deposited into keratinocyte migration 'trails' and required for optimal monolayer wound repair.</title>
        <authorList>
            <person name="Providence K.M."/>
            <person name="Higgins S.P."/>
            <person name="Mullen A."/>
            <person name="Battista A."/>
            <person name="Samarakoon R."/>
            <person name="Higgins C.E."/>
            <person name="Wilkins-Port C.E."/>
            <person name="Higgins P.J."/>
        </authorList>
    </citation>
    <scope>FUNCTION</scope>
</reference>
<reference key="27">
    <citation type="journal article" date="2011" name="Biochem. Biophys. Res. Commun.">
        <title>Longistatin, a novel plasminogen activator from vector ticks, is resistant to plasminogen activator inhibitor-1.</title>
        <authorList>
            <person name="Anisuzzaman X."/>
            <person name="Khyrul Islam M."/>
            <person name="Abdul Alim M."/>
            <person name="Miyoshi T."/>
            <person name="Hatta T."/>
            <person name="Yamaji K."/>
            <person name="Matsumoto Y."/>
            <person name="Fujisaki K."/>
            <person name="Tsuji N."/>
        </authorList>
    </citation>
    <scope>FUNCTION</scope>
    <scope>INTERACTION WITH PLAT</scope>
</reference>
<reference key="28">
    <citation type="journal article" date="2012" name="J. Proteome Res.">
        <title>Resveratrol-induced changes of the human adipocyte secretion profile.</title>
        <authorList>
            <person name="Rosenow A."/>
            <person name="Noben J.P."/>
            <person name="Jocken J."/>
            <person name="Kallendrusch S."/>
            <person name="Fischer-Posovszky P."/>
            <person name="Mariman E.C."/>
            <person name="Renes J."/>
        </authorList>
    </citation>
    <scope>IDENTIFICATION BY MASS SPECTROMETRY [LARGE SCALE ANALYSIS]</scope>
</reference>
<reference key="29">
    <citation type="journal article" date="2013" name="Eur. J. Pharmacol.">
        <title>Coagulation factor Xa induces an inflammatory signalling by activation of protease-activated receptors in human atrial tissue.</title>
        <authorList>
            <person name="Bukowska A."/>
            <person name="Zacharias I."/>
            <person name="Weinert S."/>
            <person name="Skopp K."/>
            <person name="Hartmann C."/>
            <person name="Huth C."/>
            <person name="Goette A."/>
        </authorList>
    </citation>
    <scope>INDUCTION BY F10</scope>
    <scope>INDUCTION BY RAPID PACING</scope>
</reference>
<reference key="30">
    <citation type="journal article" date="2015" name="Tissue Eng. Part A">
        <title>Recombinant human plasminogen activator inhibitor-1 promotes cementogenic differentiation of human periodontal ligament stem cells.</title>
        <authorList>
            <person name="Jin H."/>
            <person name="Choung H.W."/>
            <person name="Lim K.T."/>
            <person name="Jin B."/>
            <person name="Jin C."/>
            <person name="Chung J.H."/>
            <person name="Choung P.H."/>
        </authorList>
    </citation>
    <scope>FUNCTION</scope>
</reference>
<reference key="31">
    <citation type="journal article" date="2016" name="Tissue Eng. Part A">
        <title>Recombinant human plasminogen activator inhibitor-1 accelerates odontoblastic differentiation of human stem cells from apical papilla.</title>
        <authorList>
            <person name="Jin B."/>
            <person name="Choung P.H."/>
        </authorList>
    </citation>
    <scope>FUNCTION</scope>
</reference>
<reference key="32">
    <citation type="journal article" date="2017" name="J. Cell. Mol. Med.">
        <title>PAI1: a novel PP1-interacting protein that mediates human plasma's anti-apoptotic effect in endothelial cells.</title>
        <authorList>
            <person name="Yao H."/>
            <person name="He G."/>
            <person name="Chen C."/>
            <person name="Yan S."/>
            <person name="Lu L."/>
            <person name="Song L."/>
            <person name="Vijayan K.V."/>
            <person name="Li Q."/>
            <person name="Xiong L."/>
            <person name="Miao X."/>
            <person name="Deng X."/>
        </authorList>
    </citation>
    <scope>INTERACTION WITH PPP1CB</scope>
</reference>
<reference key="33">
    <citation type="journal article" date="2017" name="Sci. Adv.">
        <title>A null mutation in SERPINE1 protects against biological aging in humans.</title>
        <authorList>
            <person name="Khan S.S."/>
            <person name="Shah S.J."/>
            <person name="Klyachko E."/>
            <person name="Baldridge A.S."/>
            <person name="Eren M."/>
            <person name="Place A.T."/>
            <person name="Aviv A."/>
            <person name="Puterman E."/>
            <person name="Lloyd-Jones D.M."/>
            <person name="Heiman M."/>
            <person name="Miyata T."/>
            <person name="Gupta S."/>
            <person name="Shapiro A.D."/>
            <person name="Vaughan D.E."/>
        </authorList>
    </citation>
    <scope>INVOLVEMENT IN PAI-1D</scope>
</reference>
<reference key="34">
    <citation type="journal article" date="1992" name="Nature">
        <title>Structural basis of latency in plasminogen activator inhibitor-1.</title>
        <authorList>
            <person name="Mottonen J."/>
            <person name="Strand A."/>
            <person name="Symersky J."/>
            <person name="Sweet R.M."/>
            <person name="Danley D.E."/>
            <person name="Geoghegan K.F."/>
            <person name="Gerard R.D."/>
            <person name="Goldsmith E.J."/>
        </authorList>
    </citation>
    <scope>X-RAY CRYSTALLOGRAPHY (2.6 ANGSTROMS)</scope>
</reference>
<reference key="35">
    <citation type="journal article" date="1995" name="Nat. Struct. Biol.">
        <title>Mechanisms contributing to the conformational and functional flexibility of plasminogen activator inhibitor-1.</title>
        <authorList>
            <person name="Aertgeerts K."/>
            <person name="de Bondt H.L."/>
            <person name="de Ranter C.J."/>
            <person name="Declerck P.J."/>
        </authorList>
    </citation>
    <scope>X-RAY CRYSTALLOGRAPHY (2.7 ANGSTROMS)</scope>
</reference>
<reference key="36">
    <citation type="journal article" date="1998" name="Structure">
        <title>Interfering with the inhibitory mechanism of serpins: crystal structure of a complex formed between cleaved plasminogen activator inhibitor type 1 and a reactive-centre loop peptide.</title>
        <authorList>
            <person name="Xue Y."/>
            <person name="Bjoerquist P."/>
            <person name="Inghardt T."/>
            <person name="Linschoten M."/>
            <person name="Musil D."/>
            <person name="Sjoelin L."/>
            <person name="Deinum J."/>
        </authorList>
    </citation>
    <scope>X-RAY CRYSTALLOGRAPHY (1.95 ANGSTROMS)</scope>
</reference>
<reference key="37">
    <citation type="journal article" date="1999" name="Structure">
        <title>The active conformation of plasminogen activator inhibitor 1, a target for drugs to control fibrinolysis and cell adhesion.</title>
        <authorList>
            <person name="Sharp A.M."/>
            <person name="Stein P.E."/>
            <person name="Pannu N.S."/>
            <person name="Carrell R.W."/>
            <person name="Berkenpas M.B."/>
            <person name="Ginsburg D."/>
            <person name="Lawrence D.A."/>
            <person name="Read R.J."/>
        </authorList>
    </citation>
    <scope>X-RAY CRYSTALLOGRAPHY (2.99 ANGSTROMS)</scope>
</reference>
<reference key="38">
    <citation type="journal article" date="2000" name="J. Mol. Biol.">
        <title>Plasminogen activator inhibitor 1. Structure of the native serpin, comparison to its other conformers and implications for serpin inactivation.</title>
        <authorList>
            <person name="Nar H."/>
            <person name="Bauer M."/>
            <person name="Stassen J.M."/>
            <person name="Lang D."/>
            <person name="Gils A."/>
            <person name="Declerck P.J."/>
        </authorList>
    </citation>
    <scope>X-RAY CRYSTALLOGRAPHY (2.7 ANGSTROMS)</scope>
</reference>
<reference key="39">
    <citation type="journal article" date="1997" name="Electrophoresis">
        <title>Mutational analysis of the genes encoding urokinase-type plasminogen activator (uPA) and its inhibitor PAI-1 in advanced ovarian cancer.</title>
        <authorList>
            <person name="Turkmen B."/>
            <person name="Schmitt M."/>
            <person name="Schmalfeldt B."/>
            <person name="Trommler P."/>
            <person name="Hell W."/>
            <person name="Creutzburg S."/>
            <person name="Graeff H."/>
            <person name="Magdolen V."/>
        </authorList>
    </citation>
    <scope>VARIANT THR-15</scope>
</reference>
<reference key="40">
    <citation type="journal article" date="1999" name="Nat. Genet.">
        <title>Characterization of single-nucleotide polymorphisms in coding regions of human genes.</title>
        <authorList>
            <person name="Cargill M."/>
            <person name="Altshuler D."/>
            <person name="Ireland J."/>
            <person name="Sklar P."/>
            <person name="Ardlie K."/>
            <person name="Patil N."/>
            <person name="Shaw N."/>
            <person name="Lane C.R."/>
            <person name="Lim E.P."/>
            <person name="Kalyanaraman N."/>
            <person name="Nemesh J."/>
            <person name="Ziaugra L."/>
            <person name="Friedland L."/>
            <person name="Rolfe A."/>
            <person name="Warrington J."/>
            <person name="Lipshutz R."/>
            <person name="Daley G.Q."/>
            <person name="Lander E.S."/>
        </authorList>
    </citation>
    <scope>VARIANTS THR-15 AND ILE-17</scope>
</reference>
<reference key="41">
    <citation type="journal article" date="1999" name="Nat. Genet.">
        <authorList>
            <person name="Cargill M."/>
            <person name="Altshuler D."/>
            <person name="Ireland J."/>
            <person name="Sklar P."/>
            <person name="Ardlie K."/>
            <person name="Patil N."/>
            <person name="Shaw N."/>
            <person name="Lane C.R."/>
            <person name="Lim E.P."/>
            <person name="Kalyanaraman N."/>
            <person name="Nemesh J."/>
            <person name="Ziaugra L."/>
            <person name="Friedland L."/>
            <person name="Rolfe A."/>
            <person name="Warrington J."/>
            <person name="Lipshutz R."/>
            <person name="Daley G.Q."/>
            <person name="Lander E.S."/>
        </authorList>
    </citation>
    <scope>ERRATUM OF PUBMED:10391209</scope>
</reference>
<protein>
    <recommendedName>
        <fullName>Plasminogen activator inhibitor 1</fullName>
        <shortName>PAI</shortName>
        <shortName>PAI-1</shortName>
    </recommendedName>
    <alternativeName>
        <fullName>Endothelial plasminogen activator inhibitor</fullName>
    </alternativeName>
    <alternativeName>
        <fullName>Serpin E1</fullName>
    </alternativeName>
</protein>
<evidence type="ECO:0000250" key="1">
    <source>
        <dbReference type="UniProtKB" id="P22777"/>
    </source>
</evidence>
<evidence type="ECO:0000255" key="2"/>
<evidence type="ECO:0000269" key="3">
    <source>
    </source>
</evidence>
<evidence type="ECO:0000269" key="4">
    <source>
    </source>
</evidence>
<evidence type="ECO:0000269" key="5">
    <source>
    </source>
</evidence>
<evidence type="ECO:0000269" key="6">
    <source>
    </source>
</evidence>
<evidence type="ECO:0000269" key="7">
    <source>
    </source>
</evidence>
<evidence type="ECO:0000269" key="8">
    <source>
    </source>
</evidence>
<evidence type="ECO:0000269" key="9">
    <source>
    </source>
</evidence>
<evidence type="ECO:0000269" key="10">
    <source>
    </source>
</evidence>
<evidence type="ECO:0000269" key="11">
    <source>
    </source>
</evidence>
<evidence type="ECO:0000269" key="12">
    <source>
    </source>
</evidence>
<evidence type="ECO:0000269" key="13">
    <source>
    </source>
</evidence>
<evidence type="ECO:0000269" key="14">
    <source>
    </source>
</evidence>
<evidence type="ECO:0000269" key="15">
    <source>
    </source>
</evidence>
<evidence type="ECO:0000269" key="16">
    <source>
    </source>
</evidence>
<evidence type="ECO:0000269" key="17">
    <source>
    </source>
</evidence>
<evidence type="ECO:0000269" key="18">
    <source>
    </source>
</evidence>
<evidence type="ECO:0000269" key="19">
    <source>
    </source>
</evidence>
<evidence type="ECO:0000269" key="20">
    <source>
    </source>
</evidence>
<evidence type="ECO:0000269" key="21">
    <source>
    </source>
</evidence>
<evidence type="ECO:0000269" key="22">
    <source>
    </source>
</evidence>
<evidence type="ECO:0000269" key="23">
    <source>
    </source>
</evidence>
<evidence type="ECO:0000269" key="24">
    <source>
    </source>
</evidence>
<evidence type="ECO:0000269" key="25">
    <source ref="8"/>
</evidence>
<evidence type="ECO:0000303" key="26">
    <source>
    </source>
</evidence>
<evidence type="ECO:0000305" key="27"/>
<evidence type="ECO:0007829" key="28">
    <source>
        <dbReference type="PDB" id="1C5G"/>
    </source>
</evidence>
<evidence type="ECO:0007829" key="29">
    <source>
        <dbReference type="PDB" id="1DB2"/>
    </source>
</evidence>
<evidence type="ECO:0007829" key="30">
    <source>
        <dbReference type="PDB" id="1LJ5"/>
    </source>
</evidence>
<evidence type="ECO:0007829" key="31">
    <source>
        <dbReference type="PDB" id="3UT3"/>
    </source>
</evidence>
<evidence type="ECO:0007829" key="32">
    <source>
        <dbReference type="PDB" id="6ZRV"/>
    </source>
</evidence>
<evidence type="ECO:0007829" key="33">
    <source>
        <dbReference type="PDB" id="7AQF"/>
    </source>
</evidence>
<evidence type="ECO:0007829" key="34">
    <source>
        <dbReference type="PDB" id="9PAI"/>
    </source>
</evidence>
<keyword id="KW-0002">3D-structure</keyword>
<keyword id="KW-0025">Alternative splicing</keyword>
<keyword id="KW-0903">Direct protein sequencing</keyword>
<keyword id="KW-0325">Glycoprotein</keyword>
<keyword id="KW-0646">Protease inhibitor</keyword>
<keyword id="KW-1267">Proteomics identification</keyword>
<keyword id="KW-1185">Reference proteome</keyword>
<keyword id="KW-0964">Secreted</keyword>
<keyword id="KW-0722">Serine protease inhibitor</keyword>
<keyword id="KW-0732">Signal</keyword>
<accession>P05121</accession>
<accession>B7Z4S0</accession>
<accession>F8WD53</accession>
<dbReference type="EMBL" id="X04429">
    <property type="protein sequence ID" value="CAA28025.1"/>
    <property type="molecule type" value="mRNA"/>
</dbReference>
<dbReference type="EMBL" id="M14083">
    <property type="protein sequence ID" value="AAA60008.1"/>
    <property type="molecule type" value="mRNA"/>
</dbReference>
<dbReference type="EMBL" id="X04729">
    <property type="protein sequence ID" value="CAA28438.1"/>
    <property type="molecule type" value="mRNA"/>
</dbReference>
<dbReference type="EMBL" id="X04731">
    <property type="protein sequence ID" value="CAA28442.1"/>
    <property type="molecule type" value="mRNA"/>
</dbReference>
<dbReference type="EMBL" id="M16006">
    <property type="protein sequence ID" value="AAA60003.1"/>
    <property type="molecule type" value="mRNA"/>
</dbReference>
<dbReference type="EMBL" id="M22321">
    <property type="protein sequence ID" value="AAA60009.1"/>
    <property type="molecule type" value="Genomic_DNA"/>
</dbReference>
<dbReference type="EMBL" id="M22314">
    <property type="protein sequence ID" value="AAA60009.1"/>
    <property type="status" value="JOINED"/>
    <property type="molecule type" value="Genomic_DNA"/>
</dbReference>
<dbReference type="EMBL" id="M22315">
    <property type="protein sequence ID" value="AAA60009.1"/>
    <property type="status" value="JOINED"/>
    <property type="molecule type" value="Genomic_DNA"/>
</dbReference>
<dbReference type="EMBL" id="M22316">
    <property type="protein sequence ID" value="AAA60009.1"/>
    <property type="status" value="JOINED"/>
    <property type="molecule type" value="Genomic_DNA"/>
</dbReference>
<dbReference type="EMBL" id="M22317">
    <property type="protein sequence ID" value="AAA60009.1"/>
    <property type="status" value="JOINED"/>
    <property type="molecule type" value="Genomic_DNA"/>
</dbReference>
<dbReference type="EMBL" id="M22318">
    <property type="protein sequence ID" value="AAA60009.1"/>
    <property type="status" value="JOINED"/>
    <property type="molecule type" value="Genomic_DNA"/>
</dbReference>
<dbReference type="EMBL" id="M22319">
    <property type="protein sequence ID" value="AAA60009.1"/>
    <property type="status" value="JOINED"/>
    <property type="molecule type" value="Genomic_DNA"/>
</dbReference>
<dbReference type="EMBL" id="M22320">
    <property type="protein sequence ID" value="AAA60009.1"/>
    <property type="status" value="JOINED"/>
    <property type="molecule type" value="Genomic_DNA"/>
</dbReference>
<dbReference type="EMBL" id="X13323">
    <property type="status" value="NOT_ANNOTATED_CDS"/>
    <property type="molecule type" value="Genomic_DNA"/>
</dbReference>
<dbReference type="EMBL" id="X13338">
    <property type="protein sequence ID" value="CAA31722.1"/>
    <property type="molecule type" value="Genomic_DNA"/>
</dbReference>
<dbReference type="EMBL" id="X13339">
    <property type="protein sequence ID" value="CAB51639.1"/>
    <property type="molecule type" value="Genomic_DNA"/>
</dbReference>
<dbReference type="EMBL" id="X13340">
    <property type="protein sequence ID" value="CAB51737.1"/>
    <property type="molecule type" value="Genomic_DNA"/>
</dbReference>
<dbReference type="EMBL" id="X13341">
    <property type="protein sequence ID" value="CAB51606.1"/>
    <property type="molecule type" value="Genomic_DNA"/>
</dbReference>
<dbReference type="EMBL" id="X13342">
    <property type="protein sequence ID" value="CAB51607.1"/>
    <property type="molecule type" value="Genomic_DNA"/>
</dbReference>
<dbReference type="EMBL" id="X13343">
    <property type="protein sequence ID" value="CAB51738.1"/>
    <property type="molecule type" value="Genomic_DNA"/>
</dbReference>
<dbReference type="EMBL" id="X13344">
    <property type="protein sequence ID" value="CAB51739.1"/>
    <property type="molecule type" value="Genomic_DNA"/>
</dbReference>
<dbReference type="EMBL" id="X13345">
    <property type="protein sequence ID" value="CAA31729.1"/>
    <property type="molecule type" value="Genomic_DNA"/>
</dbReference>
<dbReference type="EMBL" id="J03764">
    <property type="protein sequence ID" value="AAA60007.1"/>
    <property type="molecule type" value="Genomic_DNA"/>
</dbReference>
<dbReference type="EMBL" id="X12701">
    <property type="protein sequence ID" value="CAA31208.1"/>
    <property type="molecule type" value="mRNA"/>
</dbReference>
<dbReference type="EMBL" id="AF386492">
    <property type="protein sequence ID" value="AAK60338.1"/>
    <property type="molecule type" value="Genomic_DNA"/>
</dbReference>
<dbReference type="EMBL" id="AK297728">
    <property type="protein sequence ID" value="BAH12656.1"/>
    <property type="molecule type" value="mRNA"/>
</dbReference>
<dbReference type="EMBL" id="AC004876">
    <property type="protein sequence ID" value="AAD45828.1"/>
    <property type="molecule type" value="Genomic_DNA"/>
</dbReference>
<dbReference type="EMBL" id="BC010860">
    <property type="protein sequence ID" value="AAH10860.1"/>
    <property type="molecule type" value="mRNA"/>
</dbReference>
<dbReference type="EMBL" id="X04744">
    <property type="protein sequence ID" value="CAA28444.1"/>
    <property type="molecule type" value="mRNA"/>
</dbReference>
<dbReference type="CCDS" id="CCDS5711.1">
    <molecule id="P05121-1"/>
</dbReference>
<dbReference type="PIR" id="A28107">
    <property type="entry name" value="ITHUP1"/>
</dbReference>
<dbReference type="RefSeq" id="NP_000593.1">
    <molecule id="P05121-1"/>
    <property type="nucleotide sequence ID" value="NM_000602.5"/>
</dbReference>
<dbReference type="PDB" id="1A7C">
    <property type="method" value="X-ray"/>
    <property type="resolution" value="1.95 A"/>
    <property type="chains" value="A=24-402"/>
</dbReference>
<dbReference type="PDB" id="1B3K">
    <property type="method" value="X-ray"/>
    <property type="resolution" value="2.99 A"/>
    <property type="chains" value="A/B/C/D=24-402"/>
</dbReference>
<dbReference type="PDB" id="1C5G">
    <property type="method" value="X-ray"/>
    <property type="resolution" value="2.60 A"/>
    <property type="chains" value="A=1-402"/>
</dbReference>
<dbReference type="PDB" id="1DB2">
    <property type="method" value="X-ray"/>
    <property type="resolution" value="2.70 A"/>
    <property type="chains" value="A/B=26-402"/>
</dbReference>
<dbReference type="PDB" id="1DVM">
    <property type="method" value="X-ray"/>
    <property type="resolution" value="2.40 A"/>
    <property type="chains" value="A/B/C/D=24-402"/>
</dbReference>
<dbReference type="PDB" id="1DVN">
    <property type="method" value="X-ray"/>
    <property type="resolution" value="2.10 A"/>
    <property type="chains" value="A=24-402"/>
</dbReference>
<dbReference type="PDB" id="1LJ5">
    <property type="method" value="X-ray"/>
    <property type="resolution" value="1.80 A"/>
    <property type="chains" value="A=24-402"/>
</dbReference>
<dbReference type="PDB" id="1OC0">
    <property type="method" value="X-ray"/>
    <property type="resolution" value="2.28 A"/>
    <property type="chains" value="A=24-402"/>
</dbReference>
<dbReference type="PDB" id="3CVM">
    <property type="method" value="X-ray"/>
    <property type="resolution" value="2.02 A"/>
    <property type="chains" value="A/B=21-402"/>
</dbReference>
<dbReference type="PDB" id="3EOX">
    <property type="method" value="X-ray"/>
    <property type="resolution" value="2.61 A"/>
    <property type="chains" value="A=24-402"/>
</dbReference>
<dbReference type="PDB" id="3PB1">
    <property type="method" value="X-ray"/>
    <property type="resolution" value="2.30 A"/>
    <property type="chains" value="I=24-402"/>
</dbReference>
<dbReference type="PDB" id="3Q02">
    <property type="method" value="X-ray"/>
    <property type="resolution" value="2.30 A"/>
    <property type="chains" value="A/B=24-402"/>
</dbReference>
<dbReference type="PDB" id="3Q03">
    <property type="method" value="X-ray"/>
    <property type="resolution" value="2.64 A"/>
    <property type="chains" value="A/B=24-402"/>
</dbReference>
<dbReference type="PDB" id="3R4L">
    <property type="method" value="X-ray"/>
    <property type="resolution" value="2.70 A"/>
    <property type="chains" value="A=24-402"/>
</dbReference>
<dbReference type="PDB" id="3UT3">
    <property type="method" value="X-ray"/>
    <property type="resolution" value="2.42 A"/>
    <property type="chains" value="A/B/C/D=28-402"/>
</dbReference>
<dbReference type="PDB" id="4AQH">
    <property type="method" value="X-ray"/>
    <property type="resolution" value="2.40 A"/>
    <property type="chains" value="A/B/C=24-402"/>
</dbReference>
<dbReference type="PDB" id="4G8O">
    <property type="method" value="X-ray"/>
    <property type="resolution" value="2.71 A"/>
    <property type="chains" value="A/B/C/D=28-402"/>
</dbReference>
<dbReference type="PDB" id="4G8R">
    <property type="method" value="X-ray"/>
    <property type="resolution" value="2.19 A"/>
    <property type="chains" value="A/B=28-402"/>
</dbReference>
<dbReference type="PDB" id="4IC0">
    <property type="method" value="X-ray"/>
    <property type="resolution" value="2.32 A"/>
    <property type="chains" value="A/B/C/D=24-402"/>
</dbReference>
<dbReference type="PDB" id="5BRR">
    <property type="method" value="X-ray"/>
    <property type="resolution" value="3.16 A"/>
    <property type="chains" value="I=24-402"/>
</dbReference>
<dbReference type="PDB" id="5ZLZ">
    <property type="method" value="X-ray"/>
    <property type="resolution" value="3.58 A"/>
    <property type="chains" value="I=29-402"/>
</dbReference>
<dbReference type="PDB" id="6GWN">
    <property type="method" value="X-ray"/>
    <property type="resolution" value="2.03 A"/>
    <property type="chains" value="A=24-402"/>
</dbReference>
<dbReference type="PDB" id="6GWP">
    <property type="method" value="X-ray"/>
    <property type="resolution" value="2.28 A"/>
    <property type="chains" value="A=24-402"/>
</dbReference>
<dbReference type="PDB" id="6GWQ">
    <property type="method" value="X-ray"/>
    <property type="resolution" value="2.32 A"/>
    <property type="chains" value="A=24-402"/>
</dbReference>
<dbReference type="PDB" id="6I8S">
    <property type="method" value="X-ray"/>
    <property type="resolution" value="2.90 A"/>
    <property type="chains" value="A/B/C/D=24-402"/>
</dbReference>
<dbReference type="PDB" id="6ZRV">
    <property type="method" value="X-ray"/>
    <property type="resolution" value="1.88 A"/>
    <property type="chains" value="A=24-402"/>
</dbReference>
<dbReference type="PDB" id="7AQF">
    <property type="method" value="X-ray"/>
    <property type="resolution" value="1.77 A"/>
    <property type="chains" value="A/B=24-402"/>
</dbReference>
<dbReference type="PDB" id="7AQG">
    <property type="method" value="X-ray"/>
    <property type="resolution" value="2.27 A"/>
    <property type="chains" value="A=24-402"/>
</dbReference>
<dbReference type="PDB" id="9PAI">
    <property type="method" value="X-ray"/>
    <property type="resolution" value="2.70 A"/>
    <property type="chains" value="A=24-369, B=370-402"/>
</dbReference>
<dbReference type="PDBsum" id="1A7C"/>
<dbReference type="PDBsum" id="1B3K"/>
<dbReference type="PDBsum" id="1C5G"/>
<dbReference type="PDBsum" id="1DB2"/>
<dbReference type="PDBsum" id="1DVM"/>
<dbReference type="PDBsum" id="1DVN"/>
<dbReference type="PDBsum" id="1LJ5"/>
<dbReference type="PDBsum" id="1OC0"/>
<dbReference type="PDBsum" id="3CVM"/>
<dbReference type="PDBsum" id="3EOX"/>
<dbReference type="PDBsum" id="3PB1"/>
<dbReference type="PDBsum" id="3Q02"/>
<dbReference type="PDBsum" id="3Q03"/>
<dbReference type="PDBsum" id="3R4L"/>
<dbReference type="PDBsum" id="3UT3"/>
<dbReference type="PDBsum" id="4AQH"/>
<dbReference type="PDBsum" id="4G8O"/>
<dbReference type="PDBsum" id="4G8R"/>
<dbReference type="PDBsum" id="4IC0"/>
<dbReference type="PDBsum" id="5BRR"/>
<dbReference type="PDBsum" id="5ZLZ"/>
<dbReference type="PDBsum" id="6GWN"/>
<dbReference type="PDBsum" id="6GWP"/>
<dbReference type="PDBsum" id="6GWQ"/>
<dbReference type="PDBsum" id="6I8S"/>
<dbReference type="PDBsum" id="6ZRV"/>
<dbReference type="PDBsum" id="7AQF"/>
<dbReference type="PDBsum" id="7AQG"/>
<dbReference type="PDBsum" id="9PAI"/>
<dbReference type="SASBDB" id="P05121"/>
<dbReference type="SMR" id="P05121"/>
<dbReference type="BioGRID" id="111091">
    <property type="interactions" value="52"/>
</dbReference>
<dbReference type="ComplexPortal" id="CPX-475">
    <property type="entry name" value="Vitronectin-PAI-1 complex"/>
</dbReference>
<dbReference type="ComplexPortal" id="CPX-483">
    <property type="entry name" value="uPA-PAI-1 complex"/>
</dbReference>
<dbReference type="ComplexPortal" id="CPX-494">
    <property type="entry name" value="tPA-PAI-1 complex"/>
</dbReference>
<dbReference type="CORUM" id="P05121"/>
<dbReference type="FunCoup" id="P05121">
    <property type="interactions" value="606"/>
</dbReference>
<dbReference type="IntAct" id="P05121">
    <property type="interactions" value="22"/>
</dbReference>
<dbReference type="MINT" id="P05121"/>
<dbReference type="STRING" id="9606.ENSP00000223095"/>
<dbReference type="BindingDB" id="P05121"/>
<dbReference type="ChEMBL" id="CHEMBL3475"/>
<dbReference type="DrugBank" id="DB12635">
    <property type="generic name" value="Aleplasinin"/>
</dbReference>
<dbReference type="DrugBank" id="DB00009">
    <property type="generic name" value="Alteplase"/>
</dbReference>
<dbReference type="DrugBank" id="DB00029">
    <property type="generic name" value="Anistreplase"/>
</dbReference>
<dbReference type="DrugBank" id="DB13242">
    <property type="generic name" value="Bucladesine"/>
</dbReference>
<dbReference type="DrugBank" id="DB02587">
    <property type="generic name" value="Colforsin"/>
</dbReference>
<dbReference type="DrugBank" id="DB09130">
    <property type="generic name" value="Copper"/>
</dbReference>
<dbReference type="DrugBank" id="DB00055">
    <property type="generic name" value="Drotrecogin alfa"/>
</dbReference>
<dbReference type="DrugBank" id="DB05254">
    <property type="generic name" value="Fibrinolysin"/>
</dbReference>
<dbReference type="DrugBank" id="DB00015">
    <property type="generic name" value="Reteplase"/>
</dbReference>
<dbReference type="DrugBank" id="DB16516">
    <property type="generic name" value="TM5614"/>
</dbReference>
<dbReference type="DrugBank" id="DB00197">
    <property type="generic name" value="Troglitazone"/>
</dbReference>
<dbReference type="DrugBank" id="DB00013">
    <property type="generic name" value="Urokinase"/>
</dbReference>
<dbReference type="DrugCentral" id="P05121"/>
<dbReference type="MEROPS" id="I04.020"/>
<dbReference type="GlyConnect" id="639">
    <property type="glycosylation" value="4 N-Linked glycans (1 site)"/>
</dbReference>
<dbReference type="GlyCosmos" id="P05121">
    <property type="glycosylation" value="6 sites, 10 glycans"/>
</dbReference>
<dbReference type="GlyGen" id="P05121">
    <property type="glycosylation" value="7 sites, 13 N-linked glycans (2 sites), 3 O-linked glycans (4 sites)"/>
</dbReference>
<dbReference type="iPTMnet" id="P05121"/>
<dbReference type="PhosphoSitePlus" id="P05121"/>
<dbReference type="BioMuta" id="SERPINE1"/>
<dbReference type="DMDM" id="129576"/>
<dbReference type="OGP" id="P05121"/>
<dbReference type="CPTAC" id="non-CPTAC-1150"/>
<dbReference type="jPOST" id="P05121"/>
<dbReference type="MassIVE" id="P05121"/>
<dbReference type="PaxDb" id="9606-ENSP00000223095"/>
<dbReference type="PeptideAtlas" id="P05121"/>
<dbReference type="ProteomicsDB" id="31379"/>
<dbReference type="ProteomicsDB" id="51802">
    <molecule id="P05121-1"/>
</dbReference>
<dbReference type="Pumba" id="P05121"/>
<dbReference type="ABCD" id="P05121">
    <property type="antibodies" value="4 sequenced antibodies"/>
</dbReference>
<dbReference type="Antibodypedia" id="3747">
    <property type="antibodies" value="1474 antibodies from 46 providers"/>
</dbReference>
<dbReference type="DNASU" id="5054"/>
<dbReference type="Ensembl" id="ENST00000223095.5">
    <molecule id="P05121-1"/>
    <property type="protein sequence ID" value="ENSP00000223095.4"/>
    <property type="gene ID" value="ENSG00000106366.9"/>
</dbReference>
<dbReference type="GeneID" id="5054"/>
<dbReference type="KEGG" id="hsa:5054"/>
<dbReference type="MANE-Select" id="ENST00000223095.5">
    <property type="protein sequence ID" value="ENSP00000223095.4"/>
    <property type="RefSeq nucleotide sequence ID" value="NM_000602.5"/>
    <property type="RefSeq protein sequence ID" value="NP_000593.1"/>
</dbReference>
<dbReference type="UCSC" id="uc003uxt.4">
    <molecule id="P05121-1"/>
    <property type="organism name" value="human"/>
</dbReference>
<dbReference type="AGR" id="HGNC:8583"/>
<dbReference type="CTD" id="5054"/>
<dbReference type="DisGeNET" id="5054"/>
<dbReference type="GeneCards" id="SERPINE1"/>
<dbReference type="GeneReviews" id="SERPINE1"/>
<dbReference type="HGNC" id="HGNC:8583">
    <property type="gene designation" value="SERPINE1"/>
</dbReference>
<dbReference type="HPA" id="ENSG00000106366">
    <property type="expression patterns" value="Tissue enhanced (gallbladder, placenta)"/>
</dbReference>
<dbReference type="MalaCards" id="SERPINE1"/>
<dbReference type="MIM" id="173360">
    <property type="type" value="gene"/>
</dbReference>
<dbReference type="MIM" id="613329">
    <property type="type" value="phenotype"/>
</dbReference>
<dbReference type="neXtProt" id="NX_P05121"/>
<dbReference type="OpenTargets" id="ENSG00000106366"/>
<dbReference type="Orphanet" id="465">
    <property type="disease" value="Congenital plasminogen activator inhibitor type 1 deficiency"/>
</dbReference>
<dbReference type="Orphanet" id="673556">
    <property type="disease" value="Pseudomyogenic hemangioendothelioma"/>
</dbReference>
<dbReference type="PharmGKB" id="PA261"/>
<dbReference type="VEuPathDB" id="HostDB:ENSG00000106366"/>
<dbReference type="eggNOG" id="KOG2392">
    <property type="taxonomic scope" value="Eukaryota"/>
</dbReference>
<dbReference type="GeneTree" id="ENSGT00940000160621"/>
<dbReference type="HOGENOM" id="CLU_023330_0_4_1"/>
<dbReference type="InParanoid" id="P05121"/>
<dbReference type="OMA" id="AMQFKIE"/>
<dbReference type="OrthoDB" id="8179360at2759"/>
<dbReference type="PAN-GO" id="P05121">
    <property type="GO annotations" value="5 GO annotations based on evolutionary models"/>
</dbReference>
<dbReference type="PhylomeDB" id="P05121"/>
<dbReference type="TreeFam" id="TF352620"/>
<dbReference type="PathwayCommons" id="P05121"/>
<dbReference type="Reactome" id="R-HSA-114608">
    <property type="pathway name" value="Platelet degranulation"/>
</dbReference>
<dbReference type="Reactome" id="R-HSA-1368108">
    <property type="pathway name" value="BMAL1:CLOCK,NPAS2 activates circadian gene expression"/>
</dbReference>
<dbReference type="Reactome" id="R-HSA-2173796">
    <property type="pathway name" value="SMAD2/SMAD3:SMAD4 heterotrimer regulates transcription"/>
</dbReference>
<dbReference type="Reactome" id="R-HSA-3000178">
    <property type="pathway name" value="ECM proteoglycans"/>
</dbReference>
<dbReference type="Reactome" id="R-HSA-75205">
    <property type="pathway name" value="Dissolution of Fibrin Clot"/>
</dbReference>
<dbReference type="Reactome" id="R-HSA-9926550">
    <property type="pathway name" value="Regulation of MITF-M-dependent genes involved in extracellular matrix, focal adhesion and epithelial-to-mesenchymal transition"/>
</dbReference>
<dbReference type="SignaLink" id="P05121"/>
<dbReference type="SIGNOR" id="P05121"/>
<dbReference type="BioGRID-ORCS" id="5054">
    <property type="hits" value="10 hits in 1164 CRISPR screens"/>
</dbReference>
<dbReference type="ChiTaRS" id="SERPINE1">
    <property type="organism name" value="human"/>
</dbReference>
<dbReference type="EvolutionaryTrace" id="P05121"/>
<dbReference type="GeneWiki" id="Plasminogen_activator_inhibitor-1"/>
<dbReference type="GenomeRNAi" id="5054"/>
<dbReference type="Pharos" id="P05121">
    <property type="development level" value="Tchem"/>
</dbReference>
<dbReference type="PRO" id="PR:P05121"/>
<dbReference type="Proteomes" id="UP000005640">
    <property type="component" value="Chromosome 7"/>
</dbReference>
<dbReference type="RNAct" id="P05121">
    <property type="molecule type" value="protein"/>
</dbReference>
<dbReference type="Bgee" id="ENSG00000106366">
    <property type="expression patterns" value="Expressed in vena cava and 154 other cell types or tissues"/>
</dbReference>
<dbReference type="ExpressionAtlas" id="P05121">
    <property type="expression patterns" value="baseline and differential"/>
</dbReference>
<dbReference type="GO" id="GO:0062023">
    <property type="term" value="C:collagen-containing extracellular matrix"/>
    <property type="evidence" value="ECO:0000314"/>
    <property type="project" value="BHF-UCL"/>
</dbReference>
<dbReference type="GO" id="GO:0070062">
    <property type="term" value="C:extracellular exosome"/>
    <property type="evidence" value="ECO:0000314"/>
    <property type="project" value="UniProtKB"/>
</dbReference>
<dbReference type="GO" id="GO:0005576">
    <property type="term" value="C:extracellular region"/>
    <property type="evidence" value="ECO:0000314"/>
    <property type="project" value="BHF-UCL"/>
</dbReference>
<dbReference type="GO" id="GO:0005615">
    <property type="term" value="C:extracellular space"/>
    <property type="evidence" value="ECO:0000314"/>
    <property type="project" value="BHF-UCL"/>
</dbReference>
<dbReference type="GO" id="GO:1904090">
    <property type="term" value="C:peptidase inhibitor complex"/>
    <property type="evidence" value="ECO:0000353"/>
    <property type="project" value="ComplexPortal"/>
</dbReference>
<dbReference type="GO" id="GO:0005886">
    <property type="term" value="C:plasma membrane"/>
    <property type="evidence" value="ECO:0000304"/>
    <property type="project" value="Reactome"/>
</dbReference>
<dbReference type="GO" id="GO:0031093">
    <property type="term" value="C:platelet alpha granule lumen"/>
    <property type="evidence" value="ECO:0000304"/>
    <property type="project" value="Reactome"/>
</dbReference>
<dbReference type="GO" id="GO:0097180">
    <property type="term" value="C:serine protease inhibitor complex"/>
    <property type="evidence" value="ECO:0000353"/>
    <property type="project" value="ComplexPortal"/>
</dbReference>
<dbReference type="GO" id="GO:0002020">
    <property type="term" value="F:protease binding"/>
    <property type="evidence" value="ECO:0000353"/>
    <property type="project" value="UniProtKB"/>
</dbReference>
<dbReference type="GO" id="GO:0004867">
    <property type="term" value="F:serine-type endopeptidase inhibitor activity"/>
    <property type="evidence" value="ECO:0000314"/>
    <property type="project" value="UniProtKB"/>
</dbReference>
<dbReference type="GO" id="GO:0005102">
    <property type="term" value="F:signaling receptor binding"/>
    <property type="evidence" value="ECO:0000353"/>
    <property type="project" value="BHF-UCL"/>
</dbReference>
<dbReference type="GO" id="GO:0001525">
    <property type="term" value="P:angiogenesis"/>
    <property type="evidence" value="ECO:0000270"/>
    <property type="project" value="UniProtKB"/>
</dbReference>
<dbReference type="GO" id="GO:0071222">
    <property type="term" value="P:cellular response to lipopolysaccharide"/>
    <property type="evidence" value="ECO:0000315"/>
    <property type="project" value="BHF-UCL"/>
</dbReference>
<dbReference type="GO" id="GO:0050829">
    <property type="term" value="P:defense response to Gram-negative bacterium"/>
    <property type="evidence" value="ECO:0000316"/>
    <property type="project" value="BHF-UCL"/>
</dbReference>
<dbReference type="GO" id="GO:0097187">
    <property type="term" value="P:dentinogenesis"/>
    <property type="evidence" value="ECO:0000314"/>
    <property type="project" value="UniProtKB"/>
</dbReference>
<dbReference type="GO" id="GO:0042730">
    <property type="term" value="P:fibrinolysis"/>
    <property type="evidence" value="ECO:0000304"/>
    <property type="project" value="Reactome"/>
</dbReference>
<dbReference type="GO" id="GO:0030195">
    <property type="term" value="P:negative regulation of blood coagulation"/>
    <property type="evidence" value="ECO:0000314"/>
    <property type="project" value="BHF-UCL"/>
</dbReference>
<dbReference type="GO" id="GO:0033629">
    <property type="term" value="P:negative regulation of cell adhesion mediated by integrin"/>
    <property type="evidence" value="ECO:0000314"/>
    <property type="project" value="BHF-UCL"/>
</dbReference>
<dbReference type="GO" id="GO:0030336">
    <property type="term" value="P:negative regulation of cell migration"/>
    <property type="evidence" value="ECO:0000314"/>
    <property type="project" value="BHF-UCL"/>
</dbReference>
<dbReference type="GO" id="GO:2000352">
    <property type="term" value="P:negative regulation of endothelial cell apoptotic process"/>
    <property type="evidence" value="ECO:0000315"/>
    <property type="project" value="BHF-UCL"/>
</dbReference>
<dbReference type="GO" id="GO:1902042">
    <property type="term" value="P:negative regulation of extrinsic apoptotic signaling pathway via death domain receptors"/>
    <property type="evidence" value="ECO:0000315"/>
    <property type="project" value="BHF-UCL"/>
</dbReference>
<dbReference type="GO" id="GO:0051918">
    <property type="term" value="P:negative regulation of fibrinolysis"/>
    <property type="evidence" value="ECO:0000314"/>
    <property type="project" value="BHF-UCL"/>
</dbReference>
<dbReference type="GO" id="GO:0010757">
    <property type="term" value="P:negative regulation of plasminogen activation"/>
    <property type="evidence" value="ECO:0000314"/>
    <property type="project" value="BHF-UCL"/>
</dbReference>
<dbReference type="GO" id="GO:0045861">
    <property type="term" value="P:negative regulation of proteolysis"/>
    <property type="evidence" value="ECO:0000314"/>
    <property type="project" value="BHF-UCL"/>
</dbReference>
<dbReference type="GO" id="GO:0014912">
    <property type="term" value="P:negative regulation of smooth muscle cell migration"/>
    <property type="evidence" value="ECO:0000314"/>
    <property type="project" value="BHF-UCL"/>
</dbReference>
<dbReference type="GO" id="GO:2000098">
    <property type="term" value="P:negative regulation of smooth muscle cell-matrix adhesion"/>
    <property type="evidence" value="ECO:0000314"/>
    <property type="project" value="BHF-UCL"/>
</dbReference>
<dbReference type="GO" id="GO:0061044">
    <property type="term" value="P:negative regulation of vascular wound healing"/>
    <property type="evidence" value="ECO:0000316"/>
    <property type="project" value="BHF-UCL"/>
</dbReference>
<dbReference type="GO" id="GO:0061045">
    <property type="term" value="P:negative regulation of wound healing"/>
    <property type="evidence" value="ECO:0000305"/>
    <property type="project" value="BHF-UCL"/>
</dbReference>
<dbReference type="GO" id="GO:0045766">
    <property type="term" value="P:positive regulation of angiogenesis"/>
    <property type="evidence" value="ECO:0000315"/>
    <property type="project" value="BHF-UCL"/>
</dbReference>
<dbReference type="GO" id="GO:0030194">
    <property type="term" value="P:positive regulation of blood coagulation"/>
    <property type="evidence" value="ECO:0000315"/>
    <property type="project" value="BHF-UCL"/>
</dbReference>
<dbReference type="GO" id="GO:0050820">
    <property type="term" value="P:positive regulation of coagulation"/>
    <property type="evidence" value="ECO:0000318"/>
    <property type="project" value="GO_Central"/>
</dbReference>
<dbReference type="GO" id="GO:0050729">
    <property type="term" value="P:positive regulation of inflammatory response"/>
    <property type="evidence" value="ECO:0000316"/>
    <property type="project" value="BHF-UCL"/>
</dbReference>
<dbReference type="GO" id="GO:0032757">
    <property type="term" value="P:positive regulation of interleukin-8 production"/>
    <property type="evidence" value="ECO:0000315"/>
    <property type="project" value="BHF-UCL"/>
</dbReference>
<dbReference type="GO" id="GO:0035491">
    <property type="term" value="P:positive regulation of leukotriene production involved in inflammatory response"/>
    <property type="evidence" value="ECO:0000315"/>
    <property type="project" value="BHF-UCL"/>
</dbReference>
<dbReference type="GO" id="GO:0090026">
    <property type="term" value="P:positive regulation of monocyte chemotaxis"/>
    <property type="evidence" value="ECO:0000315"/>
    <property type="project" value="BHF-UCL"/>
</dbReference>
<dbReference type="GO" id="GO:1901331">
    <property type="term" value="P:positive regulation of odontoblast differentiation"/>
    <property type="evidence" value="ECO:0000314"/>
    <property type="project" value="UniProtKB"/>
</dbReference>
<dbReference type="GO" id="GO:0048260">
    <property type="term" value="P:positive regulation of receptor-mediated endocytosis"/>
    <property type="evidence" value="ECO:0000314"/>
    <property type="project" value="BHF-UCL"/>
</dbReference>
<dbReference type="GO" id="GO:0010469">
    <property type="term" value="P:regulation of signaling receptor activity"/>
    <property type="evidence" value="ECO:0000314"/>
    <property type="project" value="BHF-UCL"/>
</dbReference>
<dbReference type="GO" id="GO:0090399">
    <property type="term" value="P:replicative senescence"/>
    <property type="evidence" value="ECO:0000315"/>
    <property type="project" value="UniProtKB"/>
</dbReference>
<dbReference type="CDD" id="cd02051">
    <property type="entry name" value="serpinE1_PAI-1"/>
    <property type="match status" value="1"/>
</dbReference>
<dbReference type="DisProt" id="DP00320"/>
<dbReference type="FunFam" id="2.30.39.10:FF:000006">
    <property type="entry name" value="Plasminogen activator inhibitor 1"/>
    <property type="match status" value="1"/>
</dbReference>
<dbReference type="FunFam" id="3.30.497.10:FF:000006">
    <property type="entry name" value="Plasminogen activator inhibitor 1"/>
    <property type="match status" value="1"/>
</dbReference>
<dbReference type="Gene3D" id="2.30.39.10">
    <property type="entry name" value="Alpha-1-antitrypsin, domain 1"/>
    <property type="match status" value="1"/>
</dbReference>
<dbReference type="Gene3D" id="3.30.497.10">
    <property type="entry name" value="Antithrombin, subunit I, domain 2"/>
    <property type="match status" value="1"/>
</dbReference>
<dbReference type="InterPro" id="IPR023795">
    <property type="entry name" value="Serpin_CS"/>
</dbReference>
<dbReference type="InterPro" id="IPR023796">
    <property type="entry name" value="Serpin_dom"/>
</dbReference>
<dbReference type="InterPro" id="IPR000215">
    <property type="entry name" value="Serpin_fam"/>
</dbReference>
<dbReference type="InterPro" id="IPR036186">
    <property type="entry name" value="Serpin_sf"/>
</dbReference>
<dbReference type="InterPro" id="IPR042178">
    <property type="entry name" value="Serpin_sf_1"/>
</dbReference>
<dbReference type="InterPro" id="IPR042185">
    <property type="entry name" value="Serpin_sf_2"/>
</dbReference>
<dbReference type="PANTHER" id="PTHR11461:SF49">
    <property type="entry name" value="PLASMINOGEN ACTIVATOR INHIBITOR 1"/>
    <property type="match status" value="1"/>
</dbReference>
<dbReference type="PANTHER" id="PTHR11461">
    <property type="entry name" value="SERINE PROTEASE INHIBITOR, SERPIN"/>
    <property type="match status" value="1"/>
</dbReference>
<dbReference type="Pfam" id="PF00079">
    <property type="entry name" value="Serpin"/>
    <property type="match status" value="1"/>
</dbReference>
<dbReference type="SMART" id="SM00093">
    <property type="entry name" value="SERPIN"/>
    <property type="match status" value="1"/>
</dbReference>
<dbReference type="SUPFAM" id="SSF56574">
    <property type="entry name" value="Serpins"/>
    <property type="match status" value="1"/>
</dbReference>
<dbReference type="PROSITE" id="PS00284">
    <property type="entry name" value="SERPIN"/>
    <property type="match status" value="1"/>
</dbReference>
<organism>
    <name type="scientific">Homo sapiens</name>
    <name type="common">Human</name>
    <dbReference type="NCBI Taxonomy" id="9606"/>
    <lineage>
        <taxon>Eukaryota</taxon>
        <taxon>Metazoa</taxon>
        <taxon>Chordata</taxon>
        <taxon>Craniata</taxon>
        <taxon>Vertebrata</taxon>
        <taxon>Euteleostomi</taxon>
        <taxon>Mammalia</taxon>
        <taxon>Eutheria</taxon>
        <taxon>Euarchontoglires</taxon>
        <taxon>Primates</taxon>
        <taxon>Haplorrhini</taxon>
        <taxon>Catarrhini</taxon>
        <taxon>Hominidae</taxon>
        <taxon>Homo</taxon>
    </lineage>
</organism>
<comment type="function">
    <text evidence="1 5 7 8 9 10 11 14 15 20 21 22 24">Serine protease inhibitor. Inhibits TMPRSS7 (PubMed:15853774). Is a primary inhibitor of tissue-type plasminogen activator (PLAT) and urokinase-type plasminogen activator (PLAU). As PLAT inhibitor, it is required for fibrinolysis down-regulation and is responsible for the controlled degradation of blood clots (PubMed:17912461, PubMed:8481516, PubMed:9207454, PubMed:21925150). As PLAU inhibitor, it is involved in the regulation of cell adhesion and spreading (PubMed:9175705). Acts as a regulator of cell migration, independently of its role as protease inhibitor (PubMed:15001579, PubMed:9168821). It is required for stimulation of keratinocyte migration during cutaneous injury repair (PubMed:18386027). It is involved in cellular and replicative senescence (PubMed:16862142). Plays a role in alveolar type 2 cells senescence in the lung (By similarity). Is involved in the regulation of cementogenic differentiation of periodontal ligament stem cells, and regulates odontoblast differentiation and dentin formation during odontogenesis (PubMed:25808697, PubMed:27046084).</text>
</comment>
<comment type="subunit">
    <text evidence="4 6 7 11 16 19">Forms a heterodimer with TMPRSS7 (PubMed:15853774). Interacts with VTN (PubMed:7522053). Binds LRP1B; binding is followed by internalization and degradation (PubMed:11384978). Interacts with PPP1CB (PubMed:28296156). In complex with PLAU/uPA, interacts with PLAUR/uPAR (PubMed:15053742). Interacts with SORL1 and LRP1, either alone or in complex with PLAU; these interactions are abolished in the presence of LRPAP1/RAP (PubMed:15053742). The ternary complex composed of PLAUR-PLAU-PAI1 also interacts with SORL1 (PubMed:15053742). Interacts with PLAT/tPA (PubMed:21925150). Also interacts with SORL1, when complexed to PLAT/tPA (PubMed:15053742).</text>
</comment>
<comment type="interaction">
    <interactant intactId="EBI-953978">
        <id>P05121</id>
    </interactant>
    <interactant intactId="EBI-1052304">
        <id>Q8NBQ5</id>
        <label>HSD17B11</label>
    </interactant>
    <organismsDiffer>false</organismsDiffer>
    <experiments>3</experiments>
</comment>
<comment type="interaction">
    <interactant intactId="EBI-953978">
        <id>P05121</id>
    </interactant>
    <interactant intactId="EBI-976767">
        <id>P02763</id>
        <label>ORM1</label>
    </interactant>
    <organismsDiffer>false</organismsDiffer>
    <experiments>4</experiments>
</comment>
<comment type="interaction">
    <interactant intactId="EBI-953978">
        <id>P05121</id>
    </interactant>
    <interactant intactId="EBI-748265">
        <id>P78337</id>
        <label>PITX1</label>
    </interactant>
    <organismsDiffer>false</organismsDiffer>
    <experiments>3</experiments>
</comment>
<comment type="interaction">
    <interactant intactId="EBI-953978">
        <id>P05121</id>
    </interactant>
    <interactant intactId="EBI-3905042">
        <id>P00749</id>
        <label>PLAU</label>
    </interactant>
    <organismsDiffer>false</organismsDiffer>
    <experiments>2</experiments>
</comment>
<comment type="interaction">
    <interactant intactId="EBI-953978">
        <id>P05121</id>
    </interactant>
    <interactant intactId="EBI-347996">
        <id>O43765</id>
        <label>SGTA</label>
    </interactant>
    <organismsDiffer>false</organismsDiffer>
    <experiments>6</experiments>
</comment>
<comment type="interaction">
    <interactant intactId="EBI-953978">
        <id>P05121</id>
    </interactant>
    <interactant intactId="EBI-744081">
        <id>Q96EQ0</id>
        <label>SGTB</label>
    </interactant>
    <organismsDiffer>false</organismsDiffer>
    <experiments>6</experiments>
</comment>
<comment type="interaction">
    <interactant intactId="EBI-953978">
        <id>P05121</id>
    </interactant>
    <interactant intactId="EBI-3939165">
        <id>O43711</id>
        <label>TLX3</label>
    </interactant>
    <organismsDiffer>false</organismsDiffer>
    <experiments>3</experiments>
</comment>
<comment type="interaction">
    <interactant intactId="EBI-953978">
        <id>P05121</id>
    </interactant>
    <interactant intactId="EBI-10982110">
        <id>Q96Q45-2</id>
        <label>TMEM237</label>
    </interactant>
    <organismsDiffer>false</organismsDiffer>
    <experiments>3</experiments>
</comment>
<comment type="interaction">
    <interactant intactId="EBI-953978">
        <id>P05121</id>
    </interactant>
    <interactant intactId="EBI-741480">
        <id>Q9UMX0</id>
        <label>UBQLN1</label>
    </interactant>
    <organismsDiffer>false</organismsDiffer>
    <experiments>3</experiments>
</comment>
<comment type="interaction">
    <interactant intactId="EBI-953978">
        <id>P05121</id>
    </interactant>
    <interactant intactId="EBI-10173939">
        <id>Q9UMX0-2</id>
        <label>UBQLN1</label>
    </interactant>
    <organismsDiffer>false</organismsDiffer>
    <experiments>3</experiments>
</comment>
<comment type="interaction">
    <interactant intactId="EBI-953978">
        <id>P05121</id>
    </interactant>
    <interactant intactId="EBI-947187">
        <id>Q9UHD9</id>
        <label>UBQLN2</label>
    </interactant>
    <organismsDiffer>false</organismsDiffer>
    <experiments>3</experiments>
</comment>
<comment type="subcellular location">
    <subcellularLocation>
        <location evidence="13">Secreted</location>
    </subcellularLocation>
</comment>
<comment type="alternative products">
    <event type="alternative splicing"/>
    <isoform>
        <id>P05121-1</id>
        <name>1</name>
        <sequence type="displayed"/>
    </isoform>
    <isoform>
        <id>P05121-2</id>
        <name>2</name>
        <sequence type="described" ref="VSP_045493"/>
    </isoform>
</comment>
<comment type="tissue specificity">
    <text evidence="13 18">Expressed in endothelial cells (PubMed:2430793, PubMed:3097076). Found in plasma, platelets, and hepatoma and fibrosarcoma cells.</text>
</comment>
<comment type="induction">
    <text evidence="12">Up-regulated by coagulation factor Xa (F10) in atrial tissues (PubMed:24041930). Up-regulated in atrial tissues by rapid pacing resembling atrial fibrillation (PubMed:24041930).</text>
</comment>
<comment type="PTM">
    <text>Inactivated by proteolytic attack of the urokinase-type (u-PA) and the tissue-type (TPA), cleaving the 369-Arg-|-Met-370 bond.</text>
</comment>
<comment type="disease" evidence="20 24">
    <disease id="DI-02169">
        <name>Plasminogen activator inhibitor-1 deficiency</name>
        <acronym>PAI-1D</acronym>
        <description>A hematologic disorder characterized by increased bleeding after trauma, injury, or surgery. Affected females have menorrhagia. The bleeding defect is due to increased fibrinolysis of fibrin blood clots due to deficiency of plasminogen activator inhibitor-1, which inhibits tissue and urinary activators of plasminogen.</description>
        <dbReference type="MIM" id="613329"/>
    </disease>
    <text evidence="17 24">The disease is caused by variants affecting the gene represented in this entry. A rare PAI-1D mutation resulting in a frameshift and protein truncation has been found in an Old Order Amish community. Homozygous mutation carriers suffer from episodes of major hemorrhage, while heterozygous carriers do not manifest abnormal bleeding (PubMed:9207454). Heterozygosity for the mutation is associated with longer leukocyte telomere length, lower fasting insulin levels, lower prevalence of diabetes mellitus, and a longer life span (PubMed:29152572).</text>
</comment>
<comment type="similarity">
    <text evidence="27">Belongs to the serpin family.</text>
</comment>
<comment type="online information" name="Wikipedia">
    <link uri="https://en.wikipedia.org/wiki/Plasminogen_activator_inhibitor-1"/>
    <text>Plasminogen activator inhibitor-1 entry</text>
</comment>
<comment type="online information" name="Protein Spotlight">
    <link uri="https://www.proteinspotlight.org/back_issues/203/"/>
    <text>Giving in to time - Issue 203 of May 2018</text>
</comment>
<sequence length="402" mass="45060">MQMSPALTCLVLGLALVFGEGSAVHHPPSYVAHLASDFGVRVFQQVAQASKDRNVVFSPYGVASVLAMLQLTTGGETQQQIQAAMGFKIDDKGMAPALRHLYKELMGPWNKDEISTTDAIFVQRDLKLVQGFMPHFFRLFRSTVKQVDFSEVERARFIINDWVKTHTKGMISNLLGKGAVDQLTRLVLVNALYFNGQWKTPFPDSSTHRRLFHKSDGSTVSVPMMAQTNKFNYTEFTTPDGHYYDILELPYHGDTLSMFIAAPYEKEVPLSALTNILSAQLISHWKGNMTRLPRLLVLPKFSLETEVDLRKPLENLGMTDMFRQFQADFTSLSDQEPLHVAQALQKVKIEVNESGTVASSSTAVIVSARMAPEEIIMDRPFLFVVRHNPTGTVLFMGQVMEP</sequence>
<gene>
    <name type="primary">SERPINE1</name>
    <name type="synonym">PAI1</name>
    <name type="synonym">PLANH1</name>
</gene>
<feature type="signal peptide">
    <location>
        <begin position="1"/>
        <end position="23"/>
    </location>
</feature>
<feature type="chain" id="PRO_0000032499" description="Plasminogen activator inhibitor 1">
    <location>
        <begin position="24"/>
        <end position="402"/>
    </location>
</feature>
<feature type="site" description="Reactive bond">
    <location>
        <begin position="369"/>
        <end position="370"/>
    </location>
</feature>
<feature type="glycosylation site" description="N-linked (GlcNAc...) asparagine">
    <location>
        <position position="232"/>
    </location>
</feature>
<feature type="glycosylation site" description="N-linked (GlcNAc...) asparagine">
    <location>
        <position position="288"/>
    </location>
</feature>
<feature type="glycosylation site" description="N-linked (GlcNAc...) asparagine" evidence="2">
    <location>
        <position position="352"/>
    </location>
</feature>
<feature type="splice variant" id="VSP_045493" description="In isoform 2." evidence="26">
    <location>
        <begin position="31"/>
        <end position="45"/>
    </location>
</feature>
<feature type="sequence variant" id="VAR_007099" description="In dbSNP:rs6092." evidence="3 23 25">
    <original>A</original>
    <variation>T</variation>
    <location>
        <position position="15"/>
    </location>
</feature>
<feature type="sequence variant" id="VAR_011750" description="In dbSNP:rs6090." evidence="3 25">
    <original>V</original>
    <variation>I</variation>
    <location>
        <position position="17"/>
    </location>
</feature>
<feature type="sequence variant" id="VAR_013086" description="In dbSNP:rs2227647." evidence="25">
    <original>H</original>
    <variation>P</variation>
    <location>
        <position position="25"/>
    </location>
</feature>
<feature type="sequence variant" id="VAR_013087" description="In dbSNP:rs2227669." evidence="25">
    <original>R</original>
    <variation>H</variation>
    <location>
        <position position="209"/>
    </location>
</feature>
<feature type="sequence variant" id="VAR_013088" description="In dbSNP:rs2227685." evidence="25">
    <original>T</original>
    <variation>N</variation>
    <location>
        <position position="255"/>
    </location>
</feature>
<feature type="mutagenesis site" description="Increased half-life of the active form when associated with C-355." evidence="9">
    <original>Q</original>
    <variation>C</variation>
    <location>
        <position position="197"/>
    </location>
</feature>
<feature type="mutagenesis site" description="Increased half-life of the active form when associated with C-197." evidence="9">
    <original>G</original>
    <variation>C</variation>
    <location>
        <position position="355"/>
    </location>
</feature>
<feature type="sequence conflict" description="In Ref. 7; CAA31208." evidence="27" ref="7">
    <original>R</original>
    <variation>A</variation>
    <location>
        <position position="53"/>
    </location>
</feature>
<feature type="sequence conflict" description="In Ref. 2; AAA60009." evidence="27" ref="2">
    <original>V</original>
    <variation>L</variation>
    <location>
        <position position="55"/>
    </location>
</feature>
<feature type="sequence conflict" description="In Ref. 7; CAA31208." evidence="27" ref="7">
    <original>G</original>
    <variation>V</variation>
    <location>
        <position position="75"/>
    </location>
</feature>
<feature type="sequence conflict" description="In Ref. 7; CAA31208." evidence="27" ref="7">
    <original>R</original>
    <variation>K</variation>
    <location>
        <position position="138"/>
    </location>
</feature>
<feature type="sequence conflict" description="In Ref. 9; BAH12656." evidence="27" ref="9">
    <original>A</original>
    <variation>V</variation>
    <location>
        <position position="226"/>
    </location>
</feature>
<feature type="sequence conflict" description="In Ref. 7; CAA31208." evidence="27" ref="7">
    <original>QLI</original>
    <variation>HVM</variation>
    <location>
        <begin position="280"/>
        <end position="282"/>
    </location>
</feature>
<feature type="turn" evidence="29">
    <location>
        <begin position="27"/>
        <end position="29"/>
    </location>
</feature>
<feature type="helix" evidence="33">
    <location>
        <begin position="30"/>
        <end position="48"/>
    </location>
</feature>
<feature type="turn" evidence="32">
    <location>
        <begin position="49"/>
        <end position="52"/>
    </location>
</feature>
<feature type="strand" evidence="33">
    <location>
        <begin position="55"/>
        <end position="57"/>
    </location>
</feature>
<feature type="helix" evidence="33">
    <location>
        <begin position="59"/>
        <end position="70"/>
    </location>
</feature>
<feature type="helix" evidence="33">
    <location>
        <begin position="75"/>
        <end position="85"/>
    </location>
</feature>
<feature type="helix" evidence="33">
    <location>
        <begin position="94"/>
        <end position="106"/>
    </location>
</feature>
<feature type="helix" evidence="30">
    <location>
        <begin position="108"/>
        <end position="110"/>
    </location>
</feature>
<feature type="turn" evidence="32">
    <location>
        <begin position="111"/>
        <end position="113"/>
    </location>
</feature>
<feature type="strand" evidence="33">
    <location>
        <begin position="114"/>
        <end position="123"/>
    </location>
</feature>
<feature type="helix" evidence="33">
    <location>
        <begin position="132"/>
        <end position="140"/>
    </location>
</feature>
<feature type="strand" evidence="33">
    <location>
        <begin position="145"/>
        <end position="147"/>
    </location>
</feature>
<feature type="helix" evidence="31">
    <location>
        <begin position="149"/>
        <end position="151"/>
    </location>
</feature>
<feature type="helix" evidence="33">
    <location>
        <begin position="152"/>
        <end position="166"/>
    </location>
</feature>
<feature type="turn" evidence="33">
    <location>
        <begin position="167"/>
        <end position="169"/>
    </location>
</feature>
<feature type="strand" evidence="34">
    <location>
        <begin position="170"/>
        <end position="172"/>
    </location>
</feature>
<feature type="helix" evidence="33">
    <location>
        <begin position="175"/>
        <end position="179"/>
    </location>
</feature>
<feature type="strand" evidence="33">
    <location>
        <begin position="186"/>
        <end position="195"/>
    </location>
</feature>
<feature type="strand" evidence="33">
    <location>
        <begin position="198"/>
        <end position="200"/>
    </location>
</feature>
<feature type="helix" evidence="33">
    <location>
        <begin position="204"/>
        <end position="206"/>
    </location>
</feature>
<feature type="strand" evidence="33">
    <location>
        <begin position="208"/>
        <end position="213"/>
    </location>
</feature>
<feature type="strand" evidence="28">
    <location>
        <begin position="216"/>
        <end position="218"/>
    </location>
</feature>
<feature type="strand" evidence="33">
    <location>
        <begin position="219"/>
        <end position="237"/>
    </location>
</feature>
<feature type="turn" evidence="28">
    <location>
        <begin position="239"/>
        <end position="241"/>
    </location>
</feature>
<feature type="strand" evidence="33">
    <location>
        <begin position="243"/>
        <end position="251"/>
    </location>
</feature>
<feature type="strand" evidence="33">
    <location>
        <begin position="254"/>
        <end position="265"/>
    </location>
</feature>
<feature type="helix" evidence="33">
    <location>
        <begin position="271"/>
        <end position="274"/>
    </location>
</feature>
<feature type="helix" evidence="33">
    <location>
        <begin position="279"/>
        <end position="287"/>
    </location>
</feature>
<feature type="strand" evidence="33">
    <location>
        <begin position="290"/>
        <end position="299"/>
    </location>
</feature>
<feature type="strand" evidence="33">
    <location>
        <begin position="301"/>
        <end position="308"/>
    </location>
</feature>
<feature type="helix" evidence="33">
    <location>
        <begin position="310"/>
        <end position="315"/>
    </location>
</feature>
<feature type="helix" evidence="33">
    <location>
        <begin position="320"/>
        <end position="322"/>
    </location>
</feature>
<feature type="turn" evidence="33">
    <location>
        <begin position="324"/>
        <end position="326"/>
    </location>
</feature>
<feature type="turn" evidence="33">
    <location>
        <begin position="330"/>
        <end position="332"/>
    </location>
</feature>
<feature type="strand" evidence="30">
    <location>
        <begin position="334"/>
        <end position="336"/>
    </location>
</feature>
<feature type="strand" evidence="33">
    <location>
        <begin position="341"/>
        <end position="351"/>
    </location>
</feature>
<feature type="strand" evidence="30">
    <location>
        <begin position="353"/>
        <end position="368"/>
    </location>
</feature>
<feature type="strand" evidence="33">
    <location>
        <begin position="374"/>
        <end position="376"/>
    </location>
</feature>
<feature type="strand" evidence="33">
    <location>
        <begin position="381"/>
        <end position="387"/>
    </location>
</feature>
<feature type="turn" evidence="33">
    <location>
        <begin position="388"/>
        <end position="391"/>
    </location>
</feature>
<feature type="strand" evidence="33">
    <location>
        <begin position="392"/>
        <end position="400"/>
    </location>
</feature>
<proteinExistence type="evidence at protein level"/>